<reference key="1">
    <citation type="journal article" date="2008" name="Genome Res.">
        <title>Comparative genome analysis of Salmonella enteritidis PT4 and Salmonella gallinarum 287/91 provides insights into evolutionary and host adaptation pathways.</title>
        <authorList>
            <person name="Thomson N.R."/>
            <person name="Clayton D.J."/>
            <person name="Windhorst D."/>
            <person name="Vernikos G."/>
            <person name="Davidson S."/>
            <person name="Churcher C."/>
            <person name="Quail M.A."/>
            <person name="Stevens M."/>
            <person name="Jones M.A."/>
            <person name="Watson M."/>
            <person name="Barron A."/>
            <person name="Layton A."/>
            <person name="Pickard D."/>
            <person name="Kingsley R.A."/>
            <person name="Bignell A."/>
            <person name="Clark L."/>
            <person name="Harris B."/>
            <person name="Ormond D."/>
            <person name="Abdellah Z."/>
            <person name="Brooks K."/>
            <person name="Cherevach I."/>
            <person name="Chillingworth T."/>
            <person name="Woodward J."/>
            <person name="Norberczak H."/>
            <person name="Lord A."/>
            <person name="Arrowsmith C."/>
            <person name="Jagels K."/>
            <person name="Moule S."/>
            <person name="Mungall K."/>
            <person name="Saunders M."/>
            <person name="Whitehead S."/>
            <person name="Chabalgoity J.A."/>
            <person name="Maskell D."/>
            <person name="Humphreys T."/>
            <person name="Roberts M."/>
            <person name="Barrow P.A."/>
            <person name="Dougan G."/>
            <person name="Parkhill J."/>
        </authorList>
    </citation>
    <scope>NUCLEOTIDE SEQUENCE [LARGE SCALE GENOMIC DNA]</scope>
    <source>
        <strain>287/91 / NCTC 13346</strain>
    </source>
</reference>
<gene>
    <name evidence="1" type="primary">yejK</name>
    <name type="ordered locus">SG2264</name>
</gene>
<accession>B5RC65</accession>
<comment type="subcellular location">
    <subcellularLocation>
        <location evidence="1">Cytoplasm</location>
        <location evidence="1">Nucleoid</location>
    </subcellularLocation>
</comment>
<comment type="similarity">
    <text evidence="1">Belongs to the YejK family.</text>
</comment>
<keyword id="KW-0963">Cytoplasm</keyword>
<name>NDPA_SALG2</name>
<sequence>MSLDINQIALHQLIKRDEQNLELVLRDSLLEPTTTVVEMVAELHRVYSAKNKAYGLFNEESELAQALRLQRQGEEDFLAFSRAATGRLRDELAKYPFADGGIVLFCHYRYLAVEYLLVTVLNNLSSMRVNENLDINPTHYLDINHADIVARIDLTEWETNPQSTRYLTFLKGRVGRKVADFFMDFLGASEGLNAKAQNRGLLQAVDDFTAEAQLDKAERQNVRQQVYSYCNEQLQAGEEIELESLSKELSGVSEVSFSEFTAEKGYELEESFPADRSTLRQLTKYAGSGGGLTINFDAMLLGERIFWDPATDTLTIKGTPPNLREQLQRRTSGEK</sequence>
<organism>
    <name type="scientific">Salmonella gallinarum (strain 287/91 / NCTC 13346)</name>
    <dbReference type="NCBI Taxonomy" id="550538"/>
    <lineage>
        <taxon>Bacteria</taxon>
        <taxon>Pseudomonadati</taxon>
        <taxon>Pseudomonadota</taxon>
        <taxon>Gammaproteobacteria</taxon>
        <taxon>Enterobacterales</taxon>
        <taxon>Enterobacteriaceae</taxon>
        <taxon>Salmonella</taxon>
    </lineage>
</organism>
<proteinExistence type="inferred from homology"/>
<feature type="chain" id="PRO_1000132730" description="Nucleoid-associated protein YejK">
    <location>
        <begin position="1"/>
        <end position="335"/>
    </location>
</feature>
<evidence type="ECO:0000255" key="1">
    <source>
        <dbReference type="HAMAP-Rule" id="MF_00730"/>
    </source>
</evidence>
<dbReference type="EMBL" id="AM933173">
    <property type="protein sequence ID" value="CAR38097.1"/>
    <property type="molecule type" value="Genomic_DNA"/>
</dbReference>
<dbReference type="RefSeq" id="WP_000050807.1">
    <property type="nucleotide sequence ID" value="NC_011274.1"/>
</dbReference>
<dbReference type="SMR" id="B5RC65"/>
<dbReference type="KEGG" id="seg:SG2264"/>
<dbReference type="HOGENOM" id="CLU_063050_0_1_6"/>
<dbReference type="Proteomes" id="UP000008321">
    <property type="component" value="Chromosome"/>
</dbReference>
<dbReference type="GO" id="GO:0043590">
    <property type="term" value="C:bacterial nucleoid"/>
    <property type="evidence" value="ECO:0007669"/>
    <property type="project" value="TreeGrafter"/>
</dbReference>
<dbReference type="GO" id="GO:0005737">
    <property type="term" value="C:cytoplasm"/>
    <property type="evidence" value="ECO:0007669"/>
    <property type="project" value="UniProtKB-UniRule"/>
</dbReference>
<dbReference type="GO" id="GO:0003690">
    <property type="term" value="F:double-stranded DNA binding"/>
    <property type="evidence" value="ECO:0007669"/>
    <property type="project" value="TreeGrafter"/>
</dbReference>
<dbReference type="GO" id="GO:0003727">
    <property type="term" value="F:single-stranded RNA binding"/>
    <property type="evidence" value="ECO:0007669"/>
    <property type="project" value="TreeGrafter"/>
</dbReference>
<dbReference type="HAMAP" id="MF_00730">
    <property type="entry name" value="NdpA"/>
    <property type="match status" value="1"/>
</dbReference>
<dbReference type="InterPro" id="IPR007358">
    <property type="entry name" value="Nucleoid_associated_NdpA"/>
</dbReference>
<dbReference type="NCBIfam" id="NF001557">
    <property type="entry name" value="PRK00378.1"/>
    <property type="match status" value="1"/>
</dbReference>
<dbReference type="PANTHER" id="PTHR38772">
    <property type="match status" value="1"/>
</dbReference>
<dbReference type="PANTHER" id="PTHR38772:SF1">
    <property type="entry name" value="NUCLEOID-ASSOCIATED PROTEIN YEJK"/>
    <property type="match status" value="1"/>
</dbReference>
<dbReference type="Pfam" id="PF04245">
    <property type="entry name" value="NA37"/>
    <property type="match status" value="1"/>
</dbReference>
<protein>
    <recommendedName>
        <fullName evidence="1">Nucleoid-associated protein YejK</fullName>
    </recommendedName>
</protein>